<organism evidence="12">
    <name type="scientific">Toxoplasma gondii</name>
    <dbReference type="NCBI Taxonomy" id="5811"/>
    <lineage>
        <taxon>Eukaryota</taxon>
        <taxon>Sar</taxon>
        <taxon>Alveolata</taxon>
        <taxon>Apicomplexa</taxon>
        <taxon>Conoidasida</taxon>
        <taxon>Coccidia</taxon>
        <taxon>Eucoccidiorida</taxon>
        <taxon>Eimeriorina</taxon>
        <taxon>Sarcocystidae</taxon>
        <taxon>Toxoplasma</taxon>
    </lineage>
</organism>
<proteinExistence type="evidence at protein level"/>
<feature type="chain" id="PRO_0000461859" description="Cysteine repeat modular protein A">
    <location>
        <begin position="1"/>
        <end position="3133"/>
    </location>
</feature>
<feature type="transmembrane region" description="Helical" evidence="1">
    <location>
        <begin position="123"/>
        <end position="143"/>
    </location>
</feature>
<feature type="transmembrane region" description="Helical" evidence="1">
    <location>
        <begin position="2229"/>
        <end position="2249"/>
    </location>
</feature>
<feature type="transmembrane region" description="Helical" evidence="1">
    <location>
        <begin position="2276"/>
        <end position="2296"/>
    </location>
</feature>
<feature type="transmembrane region" description="Helical" evidence="1">
    <location>
        <begin position="2339"/>
        <end position="2359"/>
    </location>
</feature>
<feature type="transmembrane region" description="Helical" evidence="1">
    <location>
        <begin position="2420"/>
        <end position="2440"/>
    </location>
</feature>
<feature type="transmembrane region" description="Helical" evidence="1">
    <location>
        <begin position="2489"/>
        <end position="2509"/>
    </location>
</feature>
<feature type="transmembrane region" description="Helical" evidence="1">
    <location>
        <begin position="2539"/>
        <end position="2559"/>
    </location>
</feature>
<feature type="transmembrane region" description="Helical" evidence="1">
    <location>
        <begin position="2569"/>
        <end position="2589"/>
    </location>
</feature>
<feature type="transmembrane region" description="Helical" evidence="1">
    <location>
        <begin position="2607"/>
        <end position="2627"/>
    </location>
</feature>
<feature type="transmembrane region" description="Helical" evidence="1">
    <location>
        <begin position="2632"/>
        <end position="2652"/>
    </location>
</feature>
<feature type="domain" description="Kringle" evidence="2">
    <location>
        <begin position="577"/>
        <end position="644"/>
    </location>
</feature>
<feature type="region of interest" description="Disordered" evidence="4">
    <location>
        <begin position="1"/>
        <end position="39"/>
    </location>
</feature>
<feature type="region of interest" description="Disordered" evidence="4">
    <location>
        <begin position="173"/>
        <end position="234"/>
    </location>
</feature>
<feature type="region of interest" description="Disordered" evidence="4">
    <location>
        <begin position="294"/>
        <end position="317"/>
    </location>
</feature>
<feature type="region of interest" description="Disordered" evidence="4">
    <location>
        <begin position="2827"/>
        <end position="2847"/>
    </location>
</feature>
<feature type="region of interest" description="Disordered" evidence="4">
    <location>
        <begin position="3049"/>
        <end position="3101"/>
    </location>
</feature>
<feature type="coiled-coil region" evidence="1">
    <location>
        <begin position="2955"/>
        <end position="3068"/>
    </location>
</feature>
<feature type="compositionally biased region" description="Basic and acidic residues" evidence="4">
    <location>
        <begin position="30"/>
        <end position="39"/>
    </location>
</feature>
<feature type="compositionally biased region" description="Basic and acidic residues" evidence="4">
    <location>
        <begin position="173"/>
        <end position="211"/>
    </location>
</feature>
<feature type="compositionally biased region" description="Basic and acidic residues" evidence="4">
    <location>
        <begin position="301"/>
        <end position="311"/>
    </location>
</feature>
<feature type="compositionally biased region" description="Basic and acidic residues" evidence="4">
    <location>
        <begin position="2827"/>
        <end position="2838"/>
    </location>
</feature>
<feature type="compositionally biased region" description="Basic and acidic residues" evidence="4">
    <location>
        <begin position="3049"/>
        <end position="3069"/>
    </location>
</feature>
<feature type="compositionally biased region" description="Acidic residues" evidence="4">
    <location>
        <begin position="3083"/>
        <end position="3094"/>
    </location>
</feature>
<feature type="glycosylation site" description="N-linked (GlcNAc...) asparagine" evidence="3">
    <location>
        <position position="301"/>
    </location>
</feature>
<feature type="glycosylation site" description="N-linked (GlcNAc...) asparagine" evidence="3">
    <location>
        <position position="392"/>
    </location>
</feature>
<feature type="glycosylation site" description="N-linked (GlcNAc...) asparagine" evidence="3">
    <location>
        <position position="470"/>
    </location>
</feature>
<feature type="glycosylation site" description="N-linked (GlcNAc...) asparagine" evidence="3">
    <location>
        <position position="1364"/>
    </location>
</feature>
<feature type="glycosylation site" description="N-linked (GlcNAc...) asparagine" evidence="3">
    <location>
        <position position="1532"/>
    </location>
</feature>
<feature type="glycosylation site" description="N-linked (GlcNAc...) asparagine" evidence="3">
    <location>
        <position position="2369"/>
    </location>
</feature>
<feature type="glycosylation site" description="N-linked (GlcNAc...) asparagine" evidence="3">
    <location>
        <position position="2565"/>
    </location>
</feature>
<feature type="glycosylation site" description="N-linked (GlcNAc...) asparagine" evidence="3">
    <location>
        <position position="2602"/>
    </location>
</feature>
<feature type="disulfide bond" evidence="2">
    <location>
        <begin position="599"/>
        <end position="631"/>
    </location>
</feature>
<feature type="disulfide bond" evidence="2">
    <location>
        <begin position="620"/>
        <end position="643"/>
    </location>
</feature>
<sequence length="3133" mass="346172">MDSASTSMSRVHPSGVYRRPLLPSGGPRSTSERDERVDLSGCPRHVERGTCLSLPPSFSAAAVDACLDSRCQVLSTAASGGCMQSATEHLRVSTRPCVASTHANSGTFAAVRSRVQRGQALSLFLLFSSSPLLLLLLLHQFFISSLHTEAVLGSPLLPALAVEVSSPEALKTTFEEREADSHRGSRDGEKVSGSRDIRFEEQEIRSRDGKETIFPSPHGDQPSGAGAWTSEGRRKKRSFYRDHIERGTSHPAFSFFSDPTSRFVLDPHLPASHASTCERGASCSPVDAIQPVFVSPSHSGNESEKAERARLEQSTPAKLWRPPKVFAESFASERRQTDTGLVSLHGDVAFRSPGFTVSIKRQAQKEWEREQLREKLLAEGGDLSMLEVQDDNDSGEIYLYSSMQLALDRQCVSQAEAMKTDWSYVRLHASNFYCFSKDDLNFETTGQNCVDSCSQTVACAGVPTTRAIRNITDTAKLPDNILGRNWPLKHCVTSRLQDALNEICGSPESIYRVVNDVAGCVPVESIDWTEASPVCVDDCNKVVNCYGQVTNADQMVPFTSDQRAMLETRKKSTCLCDETLEQGKLYRGCQTRTRTGRECQRWDVDSPHEHFELREAHNYCRNVNAEAEIWCYTTDPHVRFDFCDPLGVSERFVQPGETVDIVISGVDLSPHYSLRIYKGSETNVCGANNGQRAPAAFKDWGVERHFLPKYSVTDGTISLLTWPDLGIEPTATGKIALCACNFFGFLASNWNGATPCSQDSHFNVQLGVLHVIGPVHASGGEVQMISGVPHEFTVRGAGLRTVDTLVAVGDRTGVMCTSPNFFQMQLELLRGVGDGAFAVFTKGIATGENQYVKTGFKSVTSDGLLATTGDLTLLATGHYCLCWQGTNNGQRAYGLVDKLVVTGVDLSLTYRSVYSPSAGSASQKLFSTFIHTYRLSKDFADDALTVRTATKTPCEGTVVAQSRKIEKEYRSTTQMATEKLLYKAKYMSVKNLPESSTTYSEMLHVCLKSPNGEVLQFLGESSISEYYSYPFHDFVLPETLHVRTPSSVYSYTVSEFSNLGLHWGTVERDGEVVIGNFLDFFTANPFSKVLHFWLSHSGNVITAWAFSASDPSPTLMATFKSEFPVGMALHTTANFVHLYLLKGQTPATLFVMDVTVPSTGLSPEALIHALDPGQAGLVEPSNIVLIYEGEEDESDPVVVLVDSGTGYIHLFDHDLQEVGKSNGQEALAQPLVKPTDLHCLRKTEGSGTVSSVWDCFATDVGLPRVIYFSIDASTKEFRFLTTYSGEGTKDGVNTNLRGPISVVAHYFSGKTLIYVAEAASAYPLLLTKVDEEETLHYYAYLSQNSVGSSSTVGRLSLLHFSDDNSSLEHVSLATFRDAWRGAEVQIVSLDTTATVPNFRYHPHEWYTVGDTHSLEPSVIGLGTLKGVRKFALSTEIPNAAYVHSIASVDPNTGVVKLELTHIQRASVEIQVIAQGMVSQMTTTFKFNVACKDGYYYSQGMCVRCAAGTYNSVNLIKADPASSWAKCRKCGENHTTVAEGSISEDQCQCQLGFHIPDESEEGAKCEPCPAGMWKDTVANTGCIGSCPAHSSTTVVGAKSAEERRCECDAGYYFVGESVLNQECVLAEKGYFSEGGFEAERVPCPQHSTTNPNDDPSFVSRNLEACVCEKGYTPASLQSLEDSSSPEWKLMEWLKIHPKHTQLAKSQVCVPCGRGFYKDSIGAHACTPCPLNSFAATSVATSAAECELCQPGYYQTGNSDVPCGECPEGHFCVGSEPTVSSLSQYAGAKIMCPDNTATVPPNAQNDHPYKCMCQEGFEFSKVDSVTPTVICQPARVGDYKGVVSNTPGQRCPSGSSTQSTGSVSLEDCICTPGYFFSEASGECTECPVGFYCPGGRDSLTASHTMPVQCPAETNTRGTMSATSAECVCDKGYYRFSSQVNSGDIVCRPCPANSFKDWVGNDVCKACSENSGTEQTGANSASQCLCSRGFYYDISQAECVACSNPLKYCPGGEVECEEEEDNCVNGKKPAEPQACPPHTRITAGYDTPWSLDDCKCDPGFAYESGSAADGEKRCEPCSAGSYKSSVQDGPCNGLCGTSSTSFPGAQTQSQCFCEEGTYFAADACHTCPIGAFCGGGLLEEAEAKLREDSSFTGITSADHVKPFAEAGYFLNKLKEELESPNDWQFTECPIQNACLSHGVCSETMTEYLCSECRRGYTNTFSKGEICTSCPSMVWNIVCLMGYYLATLLFNIVMTYMNVAAGFNRRSIHSIVIKIASNYLTGISVLSVIDFSTIAFPSWITDLTATVTETVSAKHSTRLMSVDCLLRDNFDLSFSESFFYTMVFYALIPIALPIVATIIMSIIVYRVRAWYHNSTQRKLELLKQTMQYGLYSLAQQLKEKYEEDRVFMIFRYIALPGESIFRRAAKFMEDMIPIYVTVLFFVYSSTTRNMLSLLDCTYIDFGRAHQAKYFLRAAMSVECTDILSGPYFKFFAVGITGLLVWSIGIPLSCFLVLYVNRKTLNSRETRLKYGFLHNGFVKKYWYWEMVVFARKFLVIVVSSVALIPSADKNGSRVWLAVVIAVIFLIIHLVTQPFDKRSYLTLDKLENHSMTIWTITLIVLAMMIGSDFSGSVNMALLLFVAVLSCMFILEVGVSLMFAYFDNVRTQQTFFRVPVIGYVFRFFARLSEKRRAREPIVVFDTENEVIQLVAAKRQTWTLFRALRKNINLAERNYFIKVMSESLGFAVVHMKLDVIPGSFLEFALRLGLAFHRVEEVSQQNKKSLQAIADGDLSQLADWSNNEHKRKDLSESAKTSQKKLATELDTFYTDMEEKFAAKDETPTAEEKTEEQDERLHDLEGELVSDTELEQMKKTMTEAEEAEEDEDRGDDAAYLRNLQDFTNDITGEDEETMYLFDQDMMTRGIALSELYLALLKLQMQDSNTINSQFDAFRLRKQIQADEFSEALQKRNRKLKVMREALESLVLSSGTSLAELGMTEEAFQSKQAELQKLNAEIEKLKTRLQELKDNPDSYREGGDVEREEDWVDEDRAAEIEKIQEENARRKLEKEEREEADREICMTGEDMENAGWFGEDDTATIDDSSDAPLPEGTFRLIGQDAETWDEFGYSSSKGNYEAAPDDGL</sequence>
<reference evidence="12" key="1">
    <citation type="submission" date="2020-03" db="EMBL/GenBank/DDBJ databases">
        <title>Genome sequence of Toxoplasma gondii RH-88 strain.</title>
        <authorList>
            <person name="Lorenzi H.A."/>
            <person name="Venepally P."/>
            <person name="Rozenberg A."/>
            <person name="Sibley D."/>
        </authorList>
    </citation>
    <scope>NUCLEOTIDE SEQUENCE [LARGE SCALE GENOMIC DNA]</scope>
    <source>
        <strain evidence="12">RH-88</strain>
    </source>
</reference>
<reference evidence="9" key="2">
    <citation type="journal article" date="2022" name="EMBO J.">
        <title>An apical membrane complex for triggering rhoptry exocytosis and invasion in Toxoplasma.</title>
        <authorList>
            <person name="Sparvoli D."/>
            <person name="Delabre J."/>
            <person name="Penarete-Vargas D.M."/>
            <person name="Kumar Mageswaran S."/>
            <person name="Tsypin L.M."/>
            <person name="Heckendorn J."/>
            <person name="Theveny L."/>
            <person name="Maynadier M."/>
            <person name="Mendonca Cova M."/>
            <person name="Berry-Sterkers L."/>
            <person name="Guerin A."/>
            <person name="Dubremetz J.F."/>
            <person name="Urbach S."/>
            <person name="Striepen B."/>
            <person name="Turkewitz A.P."/>
            <person name="Chang Y.W."/>
            <person name="Lebrun M."/>
        </authorList>
    </citation>
    <scope>FUNCTION</scope>
    <scope>INTERACTION WITH CYSTEINE REPEAT MODULAR PROTEIN B; MICRONEMAL PROTEIN 15 AND THROMBOSPONDIN TYPE 1 DOMAIN-CONTAINING PROTEIN</scope>
    <scope>SUBCELLULAR LOCATION</scope>
    <scope>DISRUPTION PHENOTYPE</scope>
</reference>
<reference evidence="9" key="3">
    <citation type="journal article" date="2023" name="PLoS Biol.">
        <title>A central CRMP complex essential for invasion in Toxoplasma gondii.</title>
        <authorList>
            <person name="Singer M."/>
            <person name="Simon K."/>
            <person name="Forne I."/>
            <person name="Meissner M."/>
        </authorList>
    </citation>
    <scope>FUNCTION</scope>
    <scope>SUBCELLULAR LOCATION</scope>
    <scope>INTERACTION WITH CYSTEINE REPEAT MODULAR PROTEIN B; MICRONEMAL PROTEIN 15 AND THROMBOSPONDIN TYPE 1 DOMAIN-CONTAINING PROTEIN</scope>
</reference>
<comment type="function">
    <text evidence="5 6">Required for triggering rhoptry secretion (PubMed:36245278, PubMed:36602948). Plays a role in host cell invasion (PubMed:36245278, PubMed:36602948).</text>
</comment>
<comment type="subunit">
    <text evidence="5 6">Component of a complex, at least composed of cysteine repeat modular protein A (CRMPa), cysteine repeat modular protein B (CRMPb), micronemal protein 15 (MIC15) and thrombospondin type 1 domain-containing protein (TSP1).</text>
</comment>
<comment type="subcellular location">
    <subcellularLocation>
        <location evidence="10">Cell membrane</location>
        <topology evidence="1">Multi-pass membrane protein</topology>
    </subcellularLocation>
    <subcellularLocation>
        <location evidence="6">Endoplasmic reticulum</location>
    </subcellularLocation>
    <subcellularLocation>
        <location evidence="6">Golgi apparatus</location>
    </subcellularLocation>
    <text evidence="5 6">Dynamically localizes throughout the secretory pathway of the parasite with considerable retention time in the endoplasmic reticulum (PubMed:36602948). In freshly egressed parasites kept in contact with host cells, accumulates at the tip of the extruded conoid (PubMed:36245278). During invasion process, the apical signal from the protein disappears as soon as the moving junction is formed (PubMed:36245278). In freshly invaded parasites accumulates near the basal end (PubMed:36602948).</text>
</comment>
<comment type="disruption phenotype">
    <text evidence="5">Conditional knockout results in defects in plaque formation due to impaired host cell invasion (PubMed:36245278). Defects in rhoptry contents discharge (PubMed:36245278). No significant effect on rhoptry secretory apparatus formation (PubMed:36245278). No significant effects on morphology and positioning of microneme and rhoptry structures (PubMed:36245278). No significant effects on parasite replication, egress and attachment to host cells (PubMed:36245278). No significant effect on microneme secretion (PubMed:36245278).</text>
</comment>
<protein>
    <recommendedName>
        <fullName evidence="7 8">Cysteine repeat modular protein A</fullName>
        <shortName evidence="8">CRMPA</shortName>
        <shortName evidence="7">TgCRMPa</shortName>
    </recommendedName>
    <alternativeName>
        <fullName evidence="11">Kringle domain-containing protein</fullName>
    </alternativeName>
</protein>
<accession>A0A7J6K144</accession>
<gene>
    <name evidence="11" type="ORF">TGRH88_069420</name>
</gene>
<keyword id="KW-1003">Cell membrane</keyword>
<keyword id="KW-0175">Coiled coil</keyword>
<keyword id="KW-1015">Disulfide bond</keyword>
<keyword id="KW-0256">Endoplasmic reticulum</keyword>
<keyword id="KW-0268">Exocytosis</keyword>
<keyword id="KW-0325">Glycoprotein</keyword>
<keyword id="KW-0333">Golgi apparatus</keyword>
<keyword id="KW-0420">Kringle</keyword>
<keyword id="KW-0472">Membrane</keyword>
<keyword id="KW-1185">Reference proteome</keyword>
<keyword id="KW-0812">Transmembrane</keyword>
<keyword id="KW-1133">Transmembrane helix</keyword>
<name>CRMPA_TOXGO</name>
<evidence type="ECO:0000255" key="1"/>
<evidence type="ECO:0000255" key="2">
    <source>
        <dbReference type="PROSITE-ProRule" id="PRU00121"/>
    </source>
</evidence>
<evidence type="ECO:0000255" key="3">
    <source>
        <dbReference type="PROSITE-ProRule" id="PRU00498"/>
    </source>
</evidence>
<evidence type="ECO:0000256" key="4">
    <source>
        <dbReference type="SAM" id="MobiDB-lite"/>
    </source>
</evidence>
<evidence type="ECO:0000269" key="5">
    <source>
    </source>
</evidence>
<evidence type="ECO:0000269" key="6">
    <source>
    </source>
</evidence>
<evidence type="ECO:0000303" key="7">
    <source>
    </source>
</evidence>
<evidence type="ECO:0000303" key="8">
    <source>
    </source>
</evidence>
<evidence type="ECO:0000305" key="9"/>
<evidence type="ECO:0000305" key="10">
    <source>
    </source>
</evidence>
<evidence type="ECO:0000312" key="11">
    <source>
        <dbReference type="EMBL" id="KAF4641133.1"/>
    </source>
</evidence>
<evidence type="ECO:0000312" key="12">
    <source>
        <dbReference type="Proteomes" id="UP000557509"/>
    </source>
</evidence>
<dbReference type="EMBL" id="JAAUHK010000194">
    <property type="protein sequence ID" value="KAF4641133.1"/>
    <property type="molecule type" value="Genomic_DNA"/>
</dbReference>
<dbReference type="VEuPathDB" id="ToxoDB:TGME49_261080"/>
<dbReference type="Proteomes" id="UP000557509">
    <property type="component" value="Unassembled WGS sequence"/>
</dbReference>
<dbReference type="GO" id="GO:0005783">
    <property type="term" value="C:endoplasmic reticulum"/>
    <property type="evidence" value="ECO:0007669"/>
    <property type="project" value="UniProtKB-SubCell"/>
</dbReference>
<dbReference type="GO" id="GO:0005794">
    <property type="term" value="C:Golgi apparatus"/>
    <property type="evidence" value="ECO:0007669"/>
    <property type="project" value="UniProtKB-SubCell"/>
</dbReference>
<dbReference type="GO" id="GO:0005886">
    <property type="term" value="C:plasma membrane"/>
    <property type="evidence" value="ECO:0007669"/>
    <property type="project" value="UniProtKB-SubCell"/>
</dbReference>
<dbReference type="GO" id="GO:0006887">
    <property type="term" value="P:exocytosis"/>
    <property type="evidence" value="ECO:0007669"/>
    <property type="project" value="UniProtKB-KW"/>
</dbReference>
<dbReference type="CDD" id="cd00108">
    <property type="entry name" value="KR"/>
    <property type="match status" value="1"/>
</dbReference>
<dbReference type="Gene3D" id="3.90.640.70">
    <property type="match status" value="2"/>
</dbReference>
<dbReference type="Gene3D" id="2.40.20.10">
    <property type="entry name" value="Plasminogen Kringle 4"/>
    <property type="match status" value="1"/>
</dbReference>
<dbReference type="Gene3D" id="2.10.50.10">
    <property type="entry name" value="Tumor Necrosis Factor Receptor, subunit A, domain 2"/>
    <property type="match status" value="6"/>
</dbReference>
<dbReference type="InterPro" id="IPR056047">
    <property type="entry name" value="CRMPA-like_DUF7630"/>
</dbReference>
<dbReference type="InterPro" id="IPR056048">
    <property type="entry name" value="CRMPA/B-like_DUF7631"/>
</dbReference>
<dbReference type="InterPro" id="IPR009030">
    <property type="entry name" value="Growth_fac_rcpt_cys_sf"/>
</dbReference>
<dbReference type="InterPro" id="IPR000001">
    <property type="entry name" value="Kringle"/>
</dbReference>
<dbReference type="InterPro" id="IPR013806">
    <property type="entry name" value="Kringle-like"/>
</dbReference>
<dbReference type="InterPro" id="IPR018056">
    <property type="entry name" value="Kringle_CS"/>
</dbReference>
<dbReference type="InterPro" id="IPR038178">
    <property type="entry name" value="Kringle_sf"/>
</dbReference>
<dbReference type="InterPro" id="IPR019562">
    <property type="entry name" value="Micronemal-adhesive-rpt_sia-bd"/>
</dbReference>
<dbReference type="InterPro" id="IPR011641">
    <property type="entry name" value="Tyr-kin_ephrin_A/B_rcpt-like"/>
</dbReference>
<dbReference type="PANTHER" id="PTHR11319">
    <property type="entry name" value="G PROTEIN-COUPLED RECEPTOR-RELATED"/>
    <property type="match status" value="1"/>
</dbReference>
<dbReference type="PANTHER" id="PTHR11319:SF35">
    <property type="entry name" value="OUTER MEMBRANE PROTEIN PMPC-RELATED"/>
    <property type="match status" value="1"/>
</dbReference>
<dbReference type="Pfam" id="PF24633">
    <property type="entry name" value="DUF7630"/>
    <property type="match status" value="1"/>
</dbReference>
<dbReference type="Pfam" id="PF24634">
    <property type="entry name" value="DUF7631"/>
    <property type="match status" value="1"/>
</dbReference>
<dbReference type="Pfam" id="PF07699">
    <property type="entry name" value="Ephrin_rec_like"/>
    <property type="match status" value="4"/>
</dbReference>
<dbReference type="Pfam" id="PF00051">
    <property type="entry name" value="Kringle"/>
    <property type="match status" value="1"/>
</dbReference>
<dbReference type="Pfam" id="PF10564">
    <property type="entry name" value="MAR_sialic_bdg"/>
    <property type="match status" value="1"/>
</dbReference>
<dbReference type="SMART" id="SM01411">
    <property type="entry name" value="Ephrin_rec_like"/>
    <property type="match status" value="9"/>
</dbReference>
<dbReference type="SMART" id="SM00130">
    <property type="entry name" value="KR"/>
    <property type="match status" value="1"/>
</dbReference>
<dbReference type="SUPFAM" id="SSF57184">
    <property type="entry name" value="Growth factor receptor domain"/>
    <property type="match status" value="2"/>
</dbReference>
<dbReference type="SUPFAM" id="SSF57440">
    <property type="entry name" value="Kringle-like"/>
    <property type="match status" value="1"/>
</dbReference>
<dbReference type="PROSITE" id="PS00021">
    <property type="entry name" value="KRINGLE_1"/>
    <property type="match status" value="1"/>
</dbReference>
<dbReference type="PROSITE" id="PS50070">
    <property type="entry name" value="KRINGLE_2"/>
    <property type="match status" value="1"/>
</dbReference>